<keyword id="KW-0004">4Fe-4S</keyword>
<keyword id="KW-0997">Cell inner membrane</keyword>
<keyword id="KW-1003">Cell membrane</keyword>
<keyword id="KW-0249">Electron transport</keyword>
<keyword id="KW-0408">Iron</keyword>
<keyword id="KW-0411">Iron-sulfur</keyword>
<keyword id="KW-0472">Membrane</keyword>
<keyword id="KW-0479">Metal-binding</keyword>
<keyword id="KW-1185">Reference proteome</keyword>
<keyword id="KW-0677">Repeat</keyword>
<keyword id="KW-1278">Translocase</keyword>
<keyword id="KW-0813">Transport</keyword>
<protein>
    <recommendedName>
        <fullName evidence="1">Ion-translocating oxidoreductase complex subunit B</fullName>
        <ecNumber evidence="1">7.-.-.-</ecNumber>
    </recommendedName>
    <alternativeName>
        <fullName evidence="1">Rsx electron transport complex subunit B</fullName>
    </alternativeName>
</protein>
<feature type="chain" id="PRO_1000013640" description="Ion-translocating oxidoreductase complex subunit B">
    <location>
        <begin position="1"/>
        <end position="192"/>
    </location>
</feature>
<feature type="domain" description="4Fe-4S" evidence="1">
    <location>
        <begin position="32"/>
        <end position="91"/>
    </location>
</feature>
<feature type="domain" description="4Fe-4S ferredoxin-type 1" evidence="1">
    <location>
        <begin position="108"/>
        <end position="137"/>
    </location>
</feature>
<feature type="domain" description="4Fe-4S ferredoxin-type 2" evidence="1">
    <location>
        <begin position="138"/>
        <end position="167"/>
    </location>
</feature>
<feature type="region of interest" description="Hydrophobic" evidence="1">
    <location>
        <begin position="1"/>
        <end position="26"/>
    </location>
</feature>
<feature type="binding site" evidence="1">
    <location>
        <position position="49"/>
    </location>
    <ligand>
        <name>[4Fe-4S] cluster</name>
        <dbReference type="ChEBI" id="CHEBI:49883"/>
        <label>1</label>
    </ligand>
</feature>
<feature type="binding site" evidence="1">
    <location>
        <position position="52"/>
    </location>
    <ligand>
        <name>[4Fe-4S] cluster</name>
        <dbReference type="ChEBI" id="CHEBI:49883"/>
        <label>1</label>
    </ligand>
</feature>
<feature type="binding site" evidence="1">
    <location>
        <position position="57"/>
    </location>
    <ligand>
        <name>[4Fe-4S] cluster</name>
        <dbReference type="ChEBI" id="CHEBI:49883"/>
        <label>1</label>
    </ligand>
</feature>
<feature type="binding site" evidence="1">
    <location>
        <position position="74"/>
    </location>
    <ligand>
        <name>[4Fe-4S] cluster</name>
        <dbReference type="ChEBI" id="CHEBI:49883"/>
        <label>1</label>
    </ligand>
</feature>
<feature type="binding site" evidence="1">
    <location>
        <position position="117"/>
    </location>
    <ligand>
        <name>[4Fe-4S] cluster</name>
        <dbReference type="ChEBI" id="CHEBI:49883"/>
        <label>2</label>
    </ligand>
</feature>
<feature type="binding site" evidence="1">
    <location>
        <position position="120"/>
    </location>
    <ligand>
        <name>[4Fe-4S] cluster</name>
        <dbReference type="ChEBI" id="CHEBI:49883"/>
        <label>2</label>
    </ligand>
</feature>
<feature type="binding site" evidence="1">
    <location>
        <position position="123"/>
    </location>
    <ligand>
        <name>[4Fe-4S] cluster</name>
        <dbReference type="ChEBI" id="CHEBI:49883"/>
        <label>2</label>
    </ligand>
</feature>
<feature type="binding site" evidence="1">
    <location>
        <position position="127"/>
    </location>
    <ligand>
        <name>[4Fe-4S] cluster</name>
        <dbReference type="ChEBI" id="CHEBI:49883"/>
        <label>3</label>
    </ligand>
</feature>
<feature type="binding site" evidence="1">
    <location>
        <position position="147"/>
    </location>
    <ligand>
        <name>[4Fe-4S] cluster</name>
        <dbReference type="ChEBI" id="CHEBI:49883"/>
        <label>3</label>
    </ligand>
</feature>
<feature type="binding site" evidence="1">
    <location>
        <position position="150"/>
    </location>
    <ligand>
        <name>[4Fe-4S] cluster</name>
        <dbReference type="ChEBI" id="CHEBI:49883"/>
        <label>3</label>
    </ligand>
</feature>
<feature type="binding site" evidence="1">
    <location>
        <position position="153"/>
    </location>
    <ligand>
        <name>[4Fe-4S] cluster</name>
        <dbReference type="ChEBI" id="CHEBI:49883"/>
        <label>3</label>
    </ligand>
</feature>
<feature type="binding site" evidence="1">
    <location>
        <position position="157"/>
    </location>
    <ligand>
        <name>[4Fe-4S] cluster</name>
        <dbReference type="ChEBI" id="CHEBI:49883"/>
        <label>2</label>
    </ligand>
</feature>
<dbReference type="EC" id="7.-.-.-" evidence="1"/>
<dbReference type="EMBL" id="CP000468">
    <property type="protein sequence ID" value="ABJ01013.1"/>
    <property type="molecule type" value="Genomic_DNA"/>
</dbReference>
<dbReference type="RefSeq" id="WP_000991809.1">
    <property type="nucleotide sequence ID" value="NZ_CADILS010000002.1"/>
</dbReference>
<dbReference type="GeneID" id="93775780"/>
<dbReference type="KEGG" id="ecv:APECO1_711"/>
<dbReference type="HOGENOM" id="CLU_063448_2_0_6"/>
<dbReference type="Proteomes" id="UP000008216">
    <property type="component" value="Chromosome"/>
</dbReference>
<dbReference type="GO" id="GO:0005886">
    <property type="term" value="C:plasma membrane"/>
    <property type="evidence" value="ECO:0007669"/>
    <property type="project" value="UniProtKB-SubCell"/>
</dbReference>
<dbReference type="GO" id="GO:0051539">
    <property type="term" value="F:4 iron, 4 sulfur cluster binding"/>
    <property type="evidence" value="ECO:0007669"/>
    <property type="project" value="UniProtKB-UniRule"/>
</dbReference>
<dbReference type="GO" id="GO:0009055">
    <property type="term" value="F:electron transfer activity"/>
    <property type="evidence" value="ECO:0007669"/>
    <property type="project" value="InterPro"/>
</dbReference>
<dbReference type="GO" id="GO:0046872">
    <property type="term" value="F:metal ion binding"/>
    <property type="evidence" value="ECO:0007669"/>
    <property type="project" value="UniProtKB-KW"/>
</dbReference>
<dbReference type="GO" id="GO:0022900">
    <property type="term" value="P:electron transport chain"/>
    <property type="evidence" value="ECO:0007669"/>
    <property type="project" value="UniProtKB-UniRule"/>
</dbReference>
<dbReference type="FunFam" id="1.10.15.40:FF:000001">
    <property type="entry name" value="Ion-translocating oxidoreductase complex subunit B"/>
    <property type="match status" value="1"/>
</dbReference>
<dbReference type="Gene3D" id="3.30.70.20">
    <property type="match status" value="1"/>
</dbReference>
<dbReference type="Gene3D" id="1.10.15.40">
    <property type="entry name" value="Electron transport complex subunit B, putative Fe-S cluster"/>
    <property type="match status" value="1"/>
</dbReference>
<dbReference type="HAMAP" id="MF_00463">
    <property type="entry name" value="RsxB_RnfB"/>
    <property type="match status" value="1"/>
</dbReference>
<dbReference type="InterPro" id="IPR007202">
    <property type="entry name" value="4Fe-4S_dom"/>
</dbReference>
<dbReference type="InterPro" id="IPR017896">
    <property type="entry name" value="4Fe4S_Fe-S-bd"/>
</dbReference>
<dbReference type="InterPro" id="IPR017900">
    <property type="entry name" value="4Fe4S_Fe_S_CS"/>
</dbReference>
<dbReference type="InterPro" id="IPR050395">
    <property type="entry name" value="4Fe4S_Ferredoxin_RnfB"/>
</dbReference>
<dbReference type="InterPro" id="IPR010207">
    <property type="entry name" value="Elect_transpt_cplx_RnfB/RsxB"/>
</dbReference>
<dbReference type="InterPro" id="IPR016463">
    <property type="entry name" value="RnfB/RsxB_Proteobac"/>
</dbReference>
<dbReference type="NCBIfam" id="NF003475">
    <property type="entry name" value="PRK05113.1"/>
    <property type="match status" value="1"/>
</dbReference>
<dbReference type="NCBIfam" id="TIGR01944">
    <property type="entry name" value="rnfB"/>
    <property type="match status" value="1"/>
</dbReference>
<dbReference type="PANTHER" id="PTHR43560">
    <property type="entry name" value="ION-TRANSLOCATING OXIDOREDUCTASE COMPLEX SUBUNIT B"/>
    <property type="match status" value="1"/>
</dbReference>
<dbReference type="PANTHER" id="PTHR43560:SF1">
    <property type="entry name" value="ION-TRANSLOCATING OXIDOREDUCTASE COMPLEX SUBUNIT B"/>
    <property type="match status" value="1"/>
</dbReference>
<dbReference type="Pfam" id="PF14697">
    <property type="entry name" value="Fer4_21"/>
    <property type="match status" value="1"/>
</dbReference>
<dbReference type="Pfam" id="PF04060">
    <property type="entry name" value="FeS"/>
    <property type="match status" value="1"/>
</dbReference>
<dbReference type="PIRSF" id="PIRSF005784">
    <property type="entry name" value="Elect_transpt_RnfB"/>
    <property type="match status" value="1"/>
</dbReference>
<dbReference type="SUPFAM" id="SSF54862">
    <property type="entry name" value="4Fe-4S ferredoxins"/>
    <property type="match status" value="1"/>
</dbReference>
<dbReference type="PROSITE" id="PS51656">
    <property type="entry name" value="4FE4S"/>
    <property type="match status" value="1"/>
</dbReference>
<dbReference type="PROSITE" id="PS00198">
    <property type="entry name" value="4FE4S_FER_1"/>
    <property type="match status" value="2"/>
</dbReference>
<dbReference type="PROSITE" id="PS51379">
    <property type="entry name" value="4FE4S_FER_2"/>
    <property type="match status" value="2"/>
</dbReference>
<evidence type="ECO:0000255" key="1">
    <source>
        <dbReference type="HAMAP-Rule" id="MF_00463"/>
    </source>
</evidence>
<organism>
    <name type="scientific">Escherichia coli O1:K1 / APEC</name>
    <dbReference type="NCBI Taxonomy" id="405955"/>
    <lineage>
        <taxon>Bacteria</taxon>
        <taxon>Pseudomonadati</taxon>
        <taxon>Pseudomonadota</taxon>
        <taxon>Gammaproteobacteria</taxon>
        <taxon>Enterobacterales</taxon>
        <taxon>Enterobacteriaceae</taxon>
        <taxon>Escherichia</taxon>
    </lineage>
</organism>
<sequence length="192" mass="20544">MNAIWIAVAAVSLLGLAFGAILGYASRRFAVEDDPVVEKIDEILPQSQCGQCGYPGCRPYAEAISCNGEKINRCAPGGEAVMLKIAELLNVEPQPLDGEAQELTPARMVAVIDENNCIGCTKCIQACPVDAIVGATRAMHTVMSDLCTGCNLCVDPCPTHCISLQPVAETPDSWKWDLNTIPVRIIPVEHHA</sequence>
<gene>
    <name evidence="1" type="primary">rsxB</name>
    <name type="synonym">rnfB</name>
    <name type="ordered locus">Ecok1_15190</name>
    <name type="ORF">APECO1_711</name>
</gene>
<comment type="function">
    <text evidence="1">Part of a membrane-bound complex that couples electron transfer with translocation of ions across the membrane. Required to maintain the reduced state of SoxR.</text>
</comment>
<comment type="cofactor">
    <cofactor evidence="1">
        <name>[4Fe-4S] cluster</name>
        <dbReference type="ChEBI" id="CHEBI:49883"/>
    </cofactor>
    <text evidence="1">Binds 3 [4Fe-4S] clusters.</text>
</comment>
<comment type="subunit">
    <text evidence="1">The complex is composed of six subunits: RsxA, RsxB, RsxC, RsxD, RsxE and RsxG.</text>
</comment>
<comment type="subcellular location">
    <subcellularLocation>
        <location evidence="1">Cell inner membrane</location>
    </subcellularLocation>
</comment>
<comment type="similarity">
    <text evidence="1">Belongs to the 4Fe4S bacterial-type ferredoxin family. RnfB subfamily.</text>
</comment>
<reference key="1">
    <citation type="journal article" date="2007" name="J. Bacteriol.">
        <title>The genome sequence of avian pathogenic Escherichia coli strain O1:K1:H7 shares strong similarities with human extraintestinal pathogenic E. coli genomes.</title>
        <authorList>
            <person name="Johnson T.J."/>
            <person name="Kariyawasam S."/>
            <person name="Wannemuehler Y."/>
            <person name="Mangiamele P."/>
            <person name="Johnson S.J."/>
            <person name="Doetkott C."/>
            <person name="Skyberg J.A."/>
            <person name="Lynne A.M."/>
            <person name="Johnson J.R."/>
            <person name="Nolan L.K."/>
        </authorList>
    </citation>
    <scope>NUCLEOTIDE SEQUENCE [LARGE SCALE GENOMIC DNA]</scope>
</reference>
<name>RSXB_ECOK1</name>
<accession>A1ABH3</accession>
<proteinExistence type="inferred from homology"/>